<keyword id="KW-0963">Cytoplasm</keyword>
<keyword id="KW-0378">Hydrolase</keyword>
<keyword id="KW-0645">Protease</keyword>
<keyword id="KW-0720">Serine protease</keyword>
<evidence type="ECO:0000255" key="1">
    <source>
        <dbReference type="HAMAP-Rule" id="MF_00444"/>
    </source>
</evidence>
<reference key="1">
    <citation type="journal article" date="2004" name="J. Bacteriol.">
        <title>Comparative genomics of two Leptospira interrogans serovars reveals novel insights into physiology and pathogenesis.</title>
        <authorList>
            <person name="Nascimento A.L.T.O."/>
            <person name="Ko A.I."/>
            <person name="Martins E.A.L."/>
            <person name="Monteiro-Vitorello C.B."/>
            <person name="Ho P.L."/>
            <person name="Haake D.A."/>
            <person name="Verjovski-Almeida S."/>
            <person name="Hartskeerl R.A."/>
            <person name="Marques M.V."/>
            <person name="Oliveira M.C."/>
            <person name="Menck C.F.M."/>
            <person name="Leite L.C.C."/>
            <person name="Carrer H."/>
            <person name="Coutinho L.L."/>
            <person name="Degrave W.M."/>
            <person name="Dellagostin O.A."/>
            <person name="El-Dorry H."/>
            <person name="Ferro E.S."/>
            <person name="Ferro M.I.T."/>
            <person name="Furlan L.R."/>
            <person name="Gamberini M."/>
            <person name="Giglioti E.A."/>
            <person name="Goes-Neto A."/>
            <person name="Goldman G.H."/>
            <person name="Goldman M.H.S."/>
            <person name="Harakava R."/>
            <person name="Jeronimo S.M.B."/>
            <person name="Junqueira-de-Azevedo I.L.M."/>
            <person name="Kimura E.T."/>
            <person name="Kuramae E.E."/>
            <person name="Lemos E.G.M."/>
            <person name="Lemos M.V.F."/>
            <person name="Marino C.L."/>
            <person name="Nunes L.R."/>
            <person name="de Oliveira R.C."/>
            <person name="Pereira G.G."/>
            <person name="Reis M.S."/>
            <person name="Schriefer A."/>
            <person name="Siqueira W.J."/>
            <person name="Sommer P."/>
            <person name="Tsai S.M."/>
            <person name="Simpson A.J.G."/>
            <person name="Ferro J.A."/>
            <person name="Camargo L.E.A."/>
            <person name="Kitajima J.P."/>
            <person name="Setubal J.C."/>
            <person name="Van Sluys M.A."/>
        </authorList>
    </citation>
    <scope>NUCLEOTIDE SEQUENCE [LARGE SCALE GENOMIC DNA]</scope>
    <source>
        <strain>Fiocruz L1-130</strain>
    </source>
</reference>
<feature type="chain" id="PRO_0000179582" description="ATP-dependent Clp protease proteolytic subunit 2">
    <location>
        <begin position="1"/>
        <end position="197"/>
    </location>
</feature>
<feature type="active site" description="Nucleophile" evidence="1">
    <location>
        <position position="97"/>
    </location>
</feature>
<feature type="active site" evidence="1">
    <location>
        <position position="122"/>
    </location>
</feature>
<dbReference type="EC" id="3.4.21.92" evidence="1"/>
<dbReference type="EMBL" id="AE016823">
    <property type="protein sequence ID" value="AAS70533.1"/>
    <property type="molecule type" value="Genomic_DNA"/>
</dbReference>
<dbReference type="RefSeq" id="WP_001115288.1">
    <property type="nucleotide sequence ID" value="NC_005823.1"/>
</dbReference>
<dbReference type="SMR" id="Q72R01"/>
<dbReference type="MEROPS" id="S14.005"/>
<dbReference type="KEGG" id="lic:LIC_11951"/>
<dbReference type="HOGENOM" id="CLU_058707_4_0_12"/>
<dbReference type="Proteomes" id="UP000007037">
    <property type="component" value="Chromosome I"/>
</dbReference>
<dbReference type="GO" id="GO:0005737">
    <property type="term" value="C:cytoplasm"/>
    <property type="evidence" value="ECO:0007669"/>
    <property type="project" value="UniProtKB-SubCell"/>
</dbReference>
<dbReference type="GO" id="GO:0009368">
    <property type="term" value="C:endopeptidase Clp complex"/>
    <property type="evidence" value="ECO:0007669"/>
    <property type="project" value="TreeGrafter"/>
</dbReference>
<dbReference type="GO" id="GO:0004176">
    <property type="term" value="F:ATP-dependent peptidase activity"/>
    <property type="evidence" value="ECO:0007669"/>
    <property type="project" value="InterPro"/>
</dbReference>
<dbReference type="GO" id="GO:0051117">
    <property type="term" value="F:ATPase binding"/>
    <property type="evidence" value="ECO:0007669"/>
    <property type="project" value="TreeGrafter"/>
</dbReference>
<dbReference type="GO" id="GO:0004252">
    <property type="term" value="F:serine-type endopeptidase activity"/>
    <property type="evidence" value="ECO:0007669"/>
    <property type="project" value="UniProtKB-UniRule"/>
</dbReference>
<dbReference type="GO" id="GO:0006515">
    <property type="term" value="P:protein quality control for misfolded or incompletely synthesized proteins"/>
    <property type="evidence" value="ECO:0007669"/>
    <property type="project" value="TreeGrafter"/>
</dbReference>
<dbReference type="CDD" id="cd07017">
    <property type="entry name" value="S14_ClpP_2"/>
    <property type="match status" value="1"/>
</dbReference>
<dbReference type="FunFam" id="3.90.226.10:FF:000055">
    <property type="entry name" value="ATP-dependent Clp protease proteolytic subunit"/>
    <property type="match status" value="1"/>
</dbReference>
<dbReference type="Gene3D" id="3.90.226.10">
    <property type="entry name" value="2-enoyl-CoA Hydratase, Chain A, domain 1"/>
    <property type="match status" value="1"/>
</dbReference>
<dbReference type="HAMAP" id="MF_00444">
    <property type="entry name" value="ClpP"/>
    <property type="match status" value="1"/>
</dbReference>
<dbReference type="InterPro" id="IPR001907">
    <property type="entry name" value="ClpP"/>
</dbReference>
<dbReference type="InterPro" id="IPR029045">
    <property type="entry name" value="ClpP/crotonase-like_dom_sf"/>
</dbReference>
<dbReference type="InterPro" id="IPR023562">
    <property type="entry name" value="ClpP/TepA"/>
</dbReference>
<dbReference type="InterPro" id="IPR033135">
    <property type="entry name" value="ClpP_His_AS"/>
</dbReference>
<dbReference type="InterPro" id="IPR018215">
    <property type="entry name" value="ClpP_Ser_AS"/>
</dbReference>
<dbReference type="NCBIfam" id="NF009205">
    <property type="entry name" value="PRK12553.1"/>
    <property type="match status" value="1"/>
</dbReference>
<dbReference type="PANTHER" id="PTHR10381">
    <property type="entry name" value="ATP-DEPENDENT CLP PROTEASE PROTEOLYTIC SUBUNIT"/>
    <property type="match status" value="1"/>
</dbReference>
<dbReference type="PANTHER" id="PTHR10381:SF11">
    <property type="entry name" value="ATP-DEPENDENT CLP PROTEASE PROTEOLYTIC SUBUNIT, MITOCHONDRIAL"/>
    <property type="match status" value="1"/>
</dbReference>
<dbReference type="Pfam" id="PF00574">
    <property type="entry name" value="CLP_protease"/>
    <property type="match status" value="1"/>
</dbReference>
<dbReference type="PRINTS" id="PR00127">
    <property type="entry name" value="CLPPROTEASEP"/>
</dbReference>
<dbReference type="SUPFAM" id="SSF52096">
    <property type="entry name" value="ClpP/crotonase"/>
    <property type="match status" value="1"/>
</dbReference>
<dbReference type="PROSITE" id="PS00382">
    <property type="entry name" value="CLP_PROTEASE_HIS"/>
    <property type="match status" value="1"/>
</dbReference>
<dbReference type="PROSITE" id="PS00381">
    <property type="entry name" value="CLP_PROTEASE_SER"/>
    <property type="match status" value="1"/>
</dbReference>
<proteinExistence type="inferred from homology"/>
<sequence length="197" mass="21635">MPETEKIAEVFEELTGSKISKNFLDHRKIFLWGPVTDESSKDLVGKLLYLEMKDPGKKITFYINSPGGVVTSGMTVFDTIKMISSPVHTVCMGMAASMGSVLLAAGTKGERSIWPNGKVMIHQPSIGGQIVAPATDLKIHAEEILKTKTKLNQILADACGHPISKLEEDTDRDYYMDAEEAIKYGIVDKLATKIDFN</sequence>
<organism>
    <name type="scientific">Leptospira interrogans serogroup Icterohaemorrhagiae serovar copenhageni (strain Fiocruz L1-130)</name>
    <dbReference type="NCBI Taxonomy" id="267671"/>
    <lineage>
        <taxon>Bacteria</taxon>
        <taxon>Pseudomonadati</taxon>
        <taxon>Spirochaetota</taxon>
        <taxon>Spirochaetia</taxon>
        <taxon>Leptospirales</taxon>
        <taxon>Leptospiraceae</taxon>
        <taxon>Leptospira</taxon>
    </lineage>
</organism>
<comment type="function">
    <text evidence="1">Cleaves peptides in various proteins in a process that requires ATP hydrolysis. Has a chymotrypsin-like activity. Plays a major role in the degradation of misfolded proteins.</text>
</comment>
<comment type="catalytic activity">
    <reaction evidence="1">
        <text>Hydrolysis of proteins to small peptides in the presence of ATP and magnesium. alpha-casein is the usual test substrate. In the absence of ATP, only oligopeptides shorter than five residues are hydrolyzed (such as succinyl-Leu-Tyr-|-NHMec, and Leu-Tyr-Leu-|-Tyr-Trp, in which cleavage of the -Tyr-|-Leu- and -Tyr-|-Trp bonds also occurs).</text>
        <dbReference type="EC" id="3.4.21.92"/>
    </reaction>
</comment>
<comment type="subunit">
    <text evidence="1">Fourteen ClpP subunits assemble into 2 heptameric rings which stack back to back to give a disk-like structure with a central cavity, resembling the structure of eukaryotic proteasomes.</text>
</comment>
<comment type="subcellular location">
    <subcellularLocation>
        <location evidence="1">Cytoplasm</location>
    </subcellularLocation>
</comment>
<comment type="similarity">
    <text evidence="1">Belongs to the peptidase S14 family.</text>
</comment>
<gene>
    <name evidence="1" type="primary">clpP2</name>
    <name type="ordered locus">LIC_11951</name>
</gene>
<protein>
    <recommendedName>
        <fullName evidence="1">ATP-dependent Clp protease proteolytic subunit 2</fullName>
        <ecNumber evidence="1">3.4.21.92</ecNumber>
    </recommendedName>
    <alternativeName>
        <fullName evidence="1">Endopeptidase Clp 2</fullName>
    </alternativeName>
</protein>
<accession>Q72R01</accession>
<name>CLPP2_LEPIC</name>